<evidence type="ECO:0000255" key="1"/>
<evidence type="ECO:0000255" key="2">
    <source>
        <dbReference type="HAMAP-Rule" id="MF_01036"/>
    </source>
</evidence>
<comment type="function">
    <text evidence="2">Involved in mRNA degradation. Hydrolyzes single-stranded polyribonucleotides processively in the 3' to 5' direction.</text>
</comment>
<comment type="catalytic activity">
    <reaction evidence="2">
        <text>Exonucleolytic cleavage in the 3'- to 5'-direction to yield nucleoside 5'-phosphates.</text>
        <dbReference type="EC" id="3.1.13.1"/>
    </reaction>
</comment>
<comment type="subcellular location">
    <subcellularLocation>
        <location evidence="2">Cytoplasm</location>
    </subcellularLocation>
</comment>
<comment type="similarity">
    <text evidence="2">Belongs to the RNR ribonuclease family. RNase II subfamily.</text>
</comment>
<protein>
    <recommendedName>
        <fullName evidence="2">Exoribonuclease 2</fullName>
        <ecNumber evidence="2">3.1.13.1</ecNumber>
    </recommendedName>
    <alternativeName>
        <fullName evidence="2">Exoribonuclease II</fullName>
        <shortName evidence="2">RNase II</shortName>
        <shortName evidence="2">Ribonuclease II</shortName>
    </alternativeName>
</protein>
<organism>
    <name type="scientific">Actinobacillus pleuropneumoniae serotype 5b (strain L20)</name>
    <dbReference type="NCBI Taxonomy" id="416269"/>
    <lineage>
        <taxon>Bacteria</taxon>
        <taxon>Pseudomonadati</taxon>
        <taxon>Pseudomonadota</taxon>
        <taxon>Gammaproteobacteria</taxon>
        <taxon>Pasteurellales</taxon>
        <taxon>Pasteurellaceae</taxon>
        <taxon>Actinobacillus</taxon>
    </lineage>
</organism>
<dbReference type="EC" id="3.1.13.1" evidence="2"/>
<dbReference type="EMBL" id="CP000569">
    <property type="protein sequence ID" value="ABN73855.1"/>
    <property type="molecule type" value="Genomic_DNA"/>
</dbReference>
<dbReference type="RefSeq" id="WP_009874880.1">
    <property type="nucleotide sequence ID" value="NC_009053.1"/>
</dbReference>
<dbReference type="SMR" id="A3N0B9"/>
<dbReference type="STRING" id="416269.APL_0757"/>
<dbReference type="EnsemblBacteria" id="ABN73855">
    <property type="protein sequence ID" value="ABN73855"/>
    <property type="gene ID" value="APL_0757"/>
</dbReference>
<dbReference type="KEGG" id="apl:APL_0757"/>
<dbReference type="PATRIC" id="fig|416269.6.peg.792"/>
<dbReference type="eggNOG" id="COG4776">
    <property type="taxonomic scope" value="Bacteria"/>
</dbReference>
<dbReference type="HOGENOM" id="CLU_002333_7_3_6"/>
<dbReference type="Proteomes" id="UP000001432">
    <property type="component" value="Chromosome"/>
</dbReference>
<dbReference type="GO" id="GO:0005829">
    <property type="term" value="C:cytosol"/>
    <property type="evidence" value="ECO:0007669"/>
    <property type="project" value="UniProtKB-ARBA"/>
</dbReference>
<dbReference type="GO" id="GO:0008859">
    <property type="term" value="F:exoribonuclease II activity"/>
    <property type="evidence" value="ECO:0007669"/>
    <property type="project" value="UniProtKB-UniRule"/>
</dbReference>
<dbReference type="GO" id="GO:0003723">
    <property type="term" value="F:RNA binding"/>
    <property type="evidence" value="ECO:0007669"/>
    <property type="project" value="UniProtKB-KW"/>
</dbReference>
<dbReference type="GO" id="GO:0006402">
    <property type="term" value="P:mRNA catabolic process"/>
    <property type="evidence" value="ECO:0007669"/>
    <property type="project" value="UniProtKB-UniRule"/>
</dbReference>
<dbReference type="Gene3D" id="2.40.50.640">
    <property type="match status" value="1"/>
</dbReference>
<dbReference type="Gene3D" id="2.40.50.140">
    <property type="entry name" value="Nucleic acid-binding proteins"/>
    <property type="match status" value="2"/>
</dbReference>
<dbReference type="HAMAP" id="MF_01036">
    <property type="entry name" value="RNase_II"/>
    <property type="match status" value="1"/>
</dbReference>
<dbReference type="InterPro" id="IPR011129">
    <property type="entry name" value="CSD"/>
</dbReference>
<dbReference type="InterPro" id="IPR012340">
    <property type="entry name" value="NA-bd_OB-fold"/>
</dbReference>
<dbReference type="InterPro" id="IPR013223">
    <property type="entry name" value="RNase_B_OB_dom"/>
</dbReference>
<dbReference type="InterPro" id="IPR011804">
    <property type="entry name" value="RNase_II"/>
</dbReference>
<dbReference type="InterPro" id="IPR001900">
    <property type="entry name" value="RNase_II/R"/>
</dbReference>
<dbReference type="InterPro" id="IPR004476">
    <property type="entry name" value="RNase_II/RNase_R"/>
</dbReference>
<dbReference type="InterPro" id="IPR050180">
    <property type="entry name" value="RNR_Ribonuclease"/>
</dbReference>
<dbReference type="InterPro" id="IPR003029">
    <property type="entry name" value="S1_domain"/>
</dbReference>
<dbReference type="NCBIfam" id="TIGR00358">
    <property type="entry name" value="3_prime_RNase"/>
    <property type="match status" value="1"/>
</dbReference>
<dbReference type="NCBIfam" id="NF003455">
    <property type="entry name" value="PRK05054.1"/>
    <property type="match status" value="1"/>
</dbReference>
<dbReference type="NCBIfam" id="TIGR02062">
    <property type="entry name" value="RNase_B"/>
    <property type="match status" value="1"/>
</dbReference>
<dbReference type="PANTHER" id="PTHR23355:SF37">
    <property type="entry name" value="EXORIBONUCLEASE 2"/>
    <property type="match status" value="1"/>
</dbReference>
<dbReference type="PANTHER" id="PTHR23355">
    <property type="entry name" value="RIBONUCLEASE"/>
    <property type="match status" value="1"/>
</dbReference>
<dbReference type="Pfam" id="PF08206">
    <property type="entry name" value="OB_RNB"/>
    <property type="match status" value="1"/>
</dbReference>
<dbReference type="Pfam" id="PF00773">
    <property type="entry name" value="RNB"/>
    <property type="match status" value="1"/>
</dbReference>
<dbReference type="Pfam" id="PF00575">
    <property type="entry name" value="S1"/>
    <property type="match status" value="1"/>
</dbReference>
<dbReference type="SMART" id="SM00357">
    <property type="entry name" value="CSP"/>
    <property type="match status" value="1"/>
</dbReference>
<dbReference type="SMART" id="SM00955">
    <property type="entry name" value="RNB"/>
    <property type="match status" value="1"/>
</dbReference>
<dbReference type="SMART" id="SM00316">
    <property type="entry name" value="S1"/>
    <property type="match status" value="2"/>
</dbReference>
<dbReference type="SUPFAM" id="SSF50249">
    <property type="entry name" value="Nucleic acid-binding proteins"/>
    <property type="match status" value="4"/>
</dbReference>
<sequence length="658" mass="75767">MFQNNPLLAQLKQQIEANKEYVEGTVKASDKAFGFLECDKKSYFIPPMEMKKVMHGDKVKAVVKREDDKEQVEIDSLLEPMLDRFIAQVRFNKDNKLQLIVDHPSIKNIIPANTHKKVTETLESGDWVVAQLKTHPLRDDRFLFAQVTQFICKADDNFAPWWVTLARHEQPREPVANEKSYELHDELDREDLTSLYFTTIDSPSTQDMDDALYIEPIKQGEVQTGWRLVVAIADPTAYIPENSNLEKAARQRCFTNYLPGFNIPMLPRELSDDLCSLVPNKKRPALVGYIETDLAGNITGDTRFVSAWVESKAKLAYDNVSDYLEQVENAWQPESAETKQQIDWLHQFTLARIEWRRNNALLFKESGDYSFELNEDGSVRDIHVEYRRIANQMIEESMIIANICCAKFLADNAKTGVFNTHAGFDPKNLELAQKFLLDTLSTDENRDALTAFYAPEKLATLEGYCEMRRSIDEFPEKFLELRLRRYLTFAEFKSEVAPHLGLGISHYATWTSPIRKYGDMVNHRLIKQVLLGKQAKTVEEGILVRLQEARRQNRLVERDIADWLYARYLFPMVEQAVEFDCEIADVSRGGVRAKVIANGAQIFVPFSTLHDKKEEMEFRPEEIALYIKGEKAYQIGQAVKVKLTEVRLETRSIVGNII</sequence>
<feature type="chain" id="PRO_1000063881" description="Exoribonuclease 2">
    <location>
        <begin position="1"/>
        <end position="658"/>
    </location>
</feature>
<feature type="domain" description="RNB" evidence="1">
    <location>
        <begin position="189"/>
        <end position="530"/>
    </location>
</feature>
<feature type="domain" description="S1 motif" evidence="2">
    <location>
        <begin position="576"/>
        <end position="658"/>
    </location>
</feature>
<keyword id="KW-0963">Cytoplasm</keyword>
<keyword id="KW-0269">Exonuclease</keyword>
<keyword id="KW-0378">Hydrolase</keyword>
<keyword id="KW-0540">Nuclease</keyword>
<keyword id="KW-1185">Reference proteome</keyword>
<keyword id="KW-0694">RNA-binding</keyword>
<name>RNB_ACTP2</name>
<proteinExistence type="inferred from homology"/>
<gene>
    <name evidence="2" type="primary">rnb</name>
    <name type="ordered locus">APL_0757</name>
</gene>
<reference key="1">
    <citation type="journal article" date="2008" name="J. Bacteriol.">
        <title>The complete genome sequence of Actinobacillus pleuropneumoniae L20 (serotype 5b).</title>
        <authorList>
            <person name="Foote S.J."/>
            <person name="Bosse J.T."/>
            <person name="Bouevitch A.B."/>
            <person name="Langford P.R."/>
            <person name="Young N.M."/>
            <person name="Nash J.H.E."/>
        </authorList>
    </citation>
    <scope>NUCLEOTIDE SEQUENCE [LARGE SCALE GENOMIC DNA]</scope>
    <source>
        <strain>L20</strain>
    </source>
</reference>
<accession>A3N0B9</accession>